<proteinExistence type="inferred from homology"/>
<feature type="chain" id="PRO_0000082906" description="Methionyl-tRNA formyltransferase">
    <location>
        <begin position="1"/>
        <end position="301"/>
    </location>
</feature>
<feature type="binding site" evidence="1">
    <location>
        <begin position="109"/>
        <end position="112"/>
    </location>
    <ligand>
        <name>(6S)-5,6,7,8-tetrahydrofolate</name>
        <dbReference type="ChEBI" id="CHEBI:57453"/>
    </ligand>
</feature>
<name>FMT_ANAMM</name>
<sequence>MKVIFMGSSEFSVPTLEFLIGSQHEVLAVYTKAPKPAGRGHLLTKTPVHAYADAHNVPVRSPASLSSDSERDIIEKYMPDAIIVASYGMILPRWMLEVPRFGCINVHPSLLPRWRGAAPMQHAILSGDAVTGVTIMQLNERLDAGDIFLQESTPIGSRENIVALSERLSSMGGRMLLKVLDNLDTMRSVSQDDAGATYAAKPSEFCVNFNDAADYICRQVRAFYPRMFFFLDGKRVKLLEADNYELAGAQIGDVVNDELHIQCGNGTVLAPKIVQPESKKPCDIRSFLRGFRGCVSNVLQR</sequence>
<reference key="1">
    <citation type="journal article" date="2005" name="Proc. Natl. Acad. Sci. U.S.A.">
        <title>Complete genome sequencing of Anaplasma marginale reveals that the surface is skewed to two superfamilies of outer membrane proteins.</title>
        <authorList>
            <person name="Brayton K.A."/>
            <person name="Kappmeyer L.S."/>
            <person name="Herndon D.R."/>
            <person name="Dark M.J."/>
            <person name="Tibbals D.L."/>
            <person name="Palmer G.H."/>
            <person name="McGuire T.C."/>
            <person name="Knowles D.P. Jr."/>
        </authorList>
    </citation>
    <scope>NUCLEOTIDE SEQUENCE [LARGE SCALE GENOMIC DNA]</scope>
    <source>
        <strain>St. Maries</strain>
    </source>
</reference>
<gene>
    <name evidence="1" type="primary">fmt</name>
    <name type="ordered locus">AM313</name>
</gene>
<protein>
    <recommendedName>
        <fullName evidence="1">Methionyl-tRNA formyltransferase</fullName>
        <ecNumber evidence="1">2.1.2.9</ecNumber>
    </recommendedName>
</protein>
<accession>Q5PBC7</accession>
<evidence type="ECO:0000255" key="1">
    <source>
        <dbReference type="HAMAP-Rule" id="MF_00182"/>
    </source>
</evidence>
<dbReference type="EC" id="2.1.2.9" evidence="1"/>
<dbReference type="EMBL" id="CP000030">
    <property type="protein sequence ID" value="AAV86402.1"/>
    <property type="molecule type" value="Genomic_DNA"/>
</dbReference>
<dbReference type="RefSeq" id="WP_010263215.1">
    <property type="nucleotide sequence ID" value="NZ_AFMU01000046.1"/>
</dbReference>
<dbReference type="SMR" id="Q5PBC7"/>
<dbReference type="GeneID" id="7398237"/>
<dbReference type="KEGG" id="ama:AM313"/>
<dbReference type="PATRIC" id="fig|320483.3.peg.265"/>
<dbReference type="HOGENOM" id="CLU_033347_2_0_5"/>
<dbReference type="GO" id="GO:0005829">
    <property type="term" value="C:cytosol"/>
    <property type="evidence" value="ECO:0007669"/>
    <property type="project" value="TreeGrafter"/>
</dbReference>
<dbReference type="GO" id="GO:0004479">
    <property type="term" value="F:methionyl-tRNA formyltransferase activity"/>
    <property type="evidence" value="ECO:0007669"/>
    <property type="project" value="UniProtKB-UniRule"/>
</dbReference>
<dbReference type="CDD" id="cd08646">
    <property type="entry name" value="FMT_core_Met-tRNA-FMT_N"/>
    <property type="match status" value="1"/>
</dbReference>
<dbReference type="CDD" id="cd08704">
    <property type="entry name" value="Met_tRNA_FMT_C"/>
    <property type="match status" value="1"/>
</dbReference>
<dbReference type="Gene3D" id="3.10.25.10">
    <property type="entry name" value="Formyl transferase, C-terminal domain"/>
    <property type="match status" value="1"/>
</dbReference>
<dbReference type="Gene3D" id="3.40.50.170">
    <property type="entry name" value="Formyl transferase, N-terminal domain"/>
    <property type="match status" value="1"/>
</dbReference>
<dbReference type="HAMAP" id="MF_00182">
    <property type="entry name" value="Formyl_trans"/>
    <property type="match status" value="1"/>
</dbReference>
<dbReference type="InterPro" id="IPR005794">
    <property type="entry name" value="Fmt"/>
</dbReference>
<dbReference type="InterPro" id="IPR005793">
    <property type="entry name" value="Formyl_trans_C"/>
</dbReference>
<dbReference type="InterPro" id="IPR037022">
    <property type="entry name" value="Formyl_trans_C_sf"/>
</dbReference>
<dbReference type="InterPro" id="IPR002376">
    <property type="entry name" value="Formyl_transf_N"/>
</dbReference>
<dbReference type="InterPro" id="IPR036477">
    <property type="entry name" value="Formyl_transf_N_sf"/>
</dbReference>
<dbReference type="InterPro" id="IPR011034">
    <property type="entry name" value="Formyl_transferase-like_C_sf"/>
</dbReference>
<dbReference type="InterPro" id="IPR044135">
    <property type="entry name" value="Met-tRNA-FMT_C"/>
</dbReference>
<dbReference type="InterPro" id="IPR041711">
    <property type="entry name" value="Met-tRNA-FMT_N"/>
</dbReference>
<dbReference type="NCBIfam" id="TIGR00460">
    <property type="entry name" value="fmt"/>
    <property type="match status" value="1"/>
</dbReference>
<dbReference type="PANTHER" id="PTHR11138">
    <property type="entry name" value="METHIONYL-TRNA FORMYLTRANSFERASE"/>
    <property type="match status" value="1"/>
</dbReference>
<dbReference type="PANTHER" id="PTHR11138:SF5">
    <property type="entry name" value="METHIONYL-TRNA FORMYLTRANSFERASE, MITOCHONDRIAL"/>
    <property type="match status" value="1"/>
</dbReference>
<dbReference type="Pfam" id="PF02911">
    <property type="entry name" value="Formyl_trans_C"/>
    <property type="match status" value="1"/>
</dbReference>
<dbReference type="Pfam" id="PF00551">
    <property type="entry name" value="Formyl_trans_N"/>
    <property type="match status" value="1"/>
</dbReference>
<dbReference type="SUPFAM" id="SSF50486">
    <property type="entry name" value="FMT C-terminal domain-like"/>
    <property type="match status" value="1"/>
</dbReference>
<dbReference type="SUPFAM" id="SSF53328">
    <property type="entry name" value="Formyltransferase"/>
    <property type="match status" value="1"/>
</dbReference>
<keyword id="KW-0648">Protein biosynthesis</keyword>
<keyword id="KW-0808">Transferase</keyword>
<organism>
    <name type="scientific">Anaplasma marginale (strain St. Maries)</name>
    <dbReference type="NCBI Taxonomy" id="234826"/>
    <lineage>
        <taxon>Bacteria</taxon>
        <taxon>Pseudomonadati</taxon>
        <taxon>Pseudomonadota</taxon>
        <taxon>Alphaproteobacteria</taxon>
        <taxon>Rickettsiales</taxon>
        <taxon>Anaplasmataceae</taxon>
        <taxon>Anaplasma</taxon>
    </lineage>
</organism>
<comment type="function">
    <text evidence="1">Attaches a formyl group to the free amino group of methionyl-tRNA(fMet). The formyl group appears to play a dual role in the initiator identity of N-formylmethionyl-tRNA by promoting its recognition by IF2 and preventing the misappropriation of this tRNA by the elongation apparatus.</text>
</comment>
<comment type="catalytic activity">
    <reaction evidence="1">
        <text>L-methionyl-tRNA(fMet) + (6R)-10-formyltetrahydrofolate = N-formyl-L-methionyl-tRNA(fMet) + (6S)-5,6,7,8-tetrahydrofolate + H(+)</text>
        <dbReference type="Rhea" id="RHEA:24380"/>
        <dbReference type="Rhea" id="RHEA-COMP:9952"/>
        <dbReference type="Rhea" id="RHEA-COMP:9953"/>
        <dbReference type="ChEBI" id="CHEBI:15378"/>
        <dbReference type="ChEBI" id="CHEBI:57453"/>
        <dbReference type="ChEBI" id="CHEBI:78530"/>
        <dbReference type="ChEBI" id="CHEBI:78844"/>
        <dbReference type="ChEBI" id="CHEBI:195366"/>
        <dbReference type="EC" id="2.1.2.9"/>
    </reaction>
</comment>
<comment type="similarity">
    <text evidence="1">Belongs to the Fmt family.</text>
</comment>